<accession>Q9LRT1</accession>
<dbReference type="EMBL" id="AB028616">
    <property type="protein sequence ID" value="BAB01126.1"/>
    <property type="molecule type" value="Genomic_DNA"/>
</dbReference>
<dbReference type="EMBL" id="CP002686">
    <property type="protein sequence ID" value="AEE77394.1"/>
    <property type="molecule type" value="Genomic_DNA"/>
</dbReference>
<dbReference type="EMBL" id="FJ708729">
    <property type="protein sequence ID" value="ACN59324.1"/>
    <property type="molecule type" value="mRNA"/>
</dbReference>
<dbReference type="RefSeq" id="NP_189443.2">
    <property type="nucleotide sequence ID" value="NM_113722.3"/>
</dbReference>
<dbReference type="SMR" id="Q9LRT1"/>
<dbReference type="BioGRID" id="7758">
    <property type="interactions" value="46"/>
</dbReference>
<dbReference type="FunCoup" id="Q9LRT1">
    <property type="interactions" value="1239"/>
</dbReference>
<dbReference type="IntAct" id="Q9LRT1">
    <property type="interactions" value="43"/>
</dbReference>
<dbReference type="STRING" id="3702.Q9LRT1"/>
<dbReference type="GlyGen" id="Q9LRT1">
    <property type="glycosylation" value="10 sites"/>
</dbReference>
<dbReference type="iPTMnet" id="Q9LRT1"/>
<dbReference type="PaxDb" id="3702-AT3G28040.1"/>
<dbReference type="ProteomicsDB" id="242993"/>
<dbReference type="EnsemblPlants" id="AT3G28040.1">
    <property type="protein sequence ID" value="AT3G28040.1"/>
    <property type="gene ID" value="AT3G28040"/>
</dbReference>
<dbReference type="GeneID" id="822428"/>
<dbReference type="Gramene" id="AT3G28040.1">
    <property type="protein sequence ID" value="AT3G28040.1"/>
    <property type="gene ID" value="AT3G28040"/>
</dbReference>
<dbReference type="KEGG" id="ath:AT3G28040"/>
<dbReference type="Araport" id="AT3G28040"/>
<dbReference type="TAIR" id="AT3G28040"/>
<dbReference type="eggNOG" id="ENOG502QU7G">
    <property type="taxonomic scope" value="Eukaryota"/>
</dbReference>
<dbReference type="HOGENOM" id="CLU_000288_22_1_1"/>
<dbReference type="InParanoid" id="Q9LRT1"/>
<dbReference type="OMA" id="WANRFKI"/>
<dbReference type="PhylomeDB" id="Q9LRT1"/>
<dbReference type="PRO" id="PR:Q9LRT1"/>
<dbReference type="Proteomes" id="UP000006548">
    <property type="component" value="Chromosome 3"/>
</dbReference>
<dbReference type="ExpressionAtlas" id="Q9LRT1">
    <property type="expression patterns" value="baseline and differential"/>
</dbReference>
<dbReference type="GO" id="GO:0016020">
    <property type="term" value="C:membrane"/>
    <property type="evidence" value="ECO:0007669"/>
    <property type="project" value="UniProtKB-SubCell"/>
</dbReference>
<dbReference type="GO" id="GO:0005524">
    <property type="term" value="F:ATP binding"/>
    <property type="evidence" value="ECO:0007669"/>
    <property type="project" value="UniProtKB-KW"/>
</dbReference>
<dbReference type="GO" id="GO:0004672">
    <property type="term" value="F:protein kinase activity"/>
    <property type="evidence" value="ECO:0007669"/>
    <property type="project" value="InterPro"/>
</dbReference>
<dbReference type="CDD" id="cd14066">
    <property type="entry name" value="STKc_IRAK"/>
    <property type="match status" value="1"/>
</dbReference>
<dbReference type="FunFam" id="3.80.10.10:FF:000317">
    <property type="entry name" value="Inactive leucine-rich repeat receptor-like protein kinase"/>
    <property type="match status" value="1"/>
</dbReference>
<dbReference type="FunFam" id="3.80.10.10:FF:000275">
    <property type="entry name" value="Leucine-rich repeat receptor-like protein kinase"/>
    <property type="match status" value="1"/>
</dbReference>
<dbReference type="FunFam" id="1.10.510.10:FF:000267">
    <property type="entry name" value="probable LRR receptor-like serine/threonine-protein kinase IRK"/>
    <property type="match status" value="1"/>
</dbReference>
<dbReference type="FunFam" id="3.80.10.10:FF:002656">
    <property type="entry name" value="Probably inactive leucine-rich repeat receptor-like protein kinase At3g28040"/>
    <property type="match status" value="1"/>
</dbReference>
<dbReference type="Gene3D" id="3.30.200.20">
    <property type="entry name" value="Phosphorylase Kinase, domain 1"/>
    <property type="match status" value="1"/>
</dbReference>
<dbReference type="Gene3D" id="3.80.10.10">
    <property type="entry name" value="Ribonuclease Inhibitor"/>
    <property type="match status" value="4"/>
</dbReference>
<dbReference type="Gene3D" id="1.10.510.10">
    <property type="entry name" value="Transferase(Phosphotransferase) domain 1"/>
    <property type="match status" value="1"/>
</dbReference>
<dbReference type="InterPro" id="IPR011009">
    <property type="entry name" value="Kinase-like_dom_sf"/>
</dbReference>
<dbReference type="InterPro" id="IPR001611">
    <property type="entry name" value="Leu-rich_rpt"/>
</dbReference>
<dbReference type="InterPro" id="IPR003591">
    <property type="entry name" value="Leu-rich_rpt_typical-subtyp"/>
</dbReference>
<dbReference type="InterPro" id="IPR032675">
    <property type="entry name" value="LRR_dom_sf"/>
</dbReference>
<dbReference type="InterPro" id="IPR013210">
    <property type="entry name" value="LRR_N_plant-typ"/>
</dbReference>
<dbReference type="InterPro" id="IPR055414">
    <property type="entry name" value="LRR_R13L4/SHOC2-like"/>
</dbReference>
<dbReference type="InterPro" id="IPR050647">
    <property type="entry name" value="Plant_LRR-RLKs"/>
</dbReference>
<dbReference type="InterPro" id="IPR000719">
    <property type="entry name" value="Prot_kinase_dom"/>
</dbReference>
<dbReference type="InterPro" id="IPR017441">
    <property type="entry name" value="Protein_kinase_ATP_BS"/>
</dbReference>
<dbReference type="PANTHER" id="PTHR48056">
    <property type="entry name" value="LRR RECEPTOR-LIKE SERINE/THREONINE-PROTEIN KINASE-RELATED"/>
    <property type="match status" value="1"/>
</dbReference>
<dbReference type="PANTHER" id="PTHR48056:SF39">
    <property type="entry name" value="PROTEIN KINASE DOMAIN-CONTAINING PROTEIN"/>
    <property type="match status" value="1"/>
</dbReference>
<dbReference type="Pfam" id="PF00560">
    <property type="entry name" value="LRR_1"/>
    <property type="match status" value="5"/>
</dbReference>
<dbReference type="Pfam" id="PF23598">
    <property type="entry name" value="LRR_14"/>
    <property type="match status" value="1"/>
</dbReference>
<dbReference type="Pfam" id="PF13855">
    <property type="entry name" value="LRR_8"/>
    <property type="match status" value="2"/>
</dbReference>
<dbReference type="Pfam" id="PF08263">
    <property type="entry name" value="LRRNT_2"/>
    <property type="match status" value="1"/>
</dbReference>
<dbReference type="Pfam" id="PF00069">
    <property type="entry name" value="Pkinase"/>
    <property type="match status" value="1"/>
</dbReference>
<dbReference type="PRINTS" id="PR00019">
    <property type="entry name" value="LEURICHRPT"/>
</dbReference>
<dbReference type="SMART" id="SM00369">
    <property type="entry name" value="LRR_TYP"/>
    <property type="match status" value="11"/>
</dbReference>
<dbReference type="SUPFAM" id="SSF52058">
    <property type="entry name" value="L domain-like"/>
    <property type="match status" value="2"/>
</dbReference>
<dbReference type="SUPFAM" id="SSF56112">
    <property type="entry name" value="Protein kinase-like (PK-like)"/>
    <property type="match status" value="1"/>
</dbReference>
<dbReference type="PROSITE" id="PS51450">
    <property type="entry name" value="LRR"/>
    <property type="match status" value="16"/>
</dbReference>
<dbReference type="PROSITE" id="PS00107">
    <property type="entry name" value="PROTEIN_KINASE_ATP"/>
    <property type="match status" value="1"/>
</dbReference>
<dbReference type="PROSITE" id="PS50011">
    <property type="entry name" value="PROTEIN_KINASE_DOM"/>
    <property type="match status" value="1"/>
</dbReference>
<keyword id="KW-0067">ATP-binding</keyword>
<keyword id="KW-0325">Glycoprotein</keyword>
<keyword id="KW-0433">Leucine-rich repeat</keyword>
<keyword id="KW-0472">Membrane</keyword>
<keyword id="KW-0547">Nucleotide-binding</keyword>
<keyword id="KW-0597">Phosphoprotein</keyword>
<keyword id="KW-0675">Receptor</keyword>
<keyword id="KW-1185">Reference proteome</keyword>
<keyword id="KW-0677">Repeat</keyword>
<keyword id="KW-0732">Signal</keyword>
<keyword id="KW-0812">Transmembrane</keyword>
<keyword id="KW-1133">Transmembrane helix</keyword>
<proteinExistence type="evidence at protein level"/>
<reference key="1">
    <citation type="journal article" date="2000" name="DNA Res.">
        <title>Structural analysis of Arabidopsis thaliana chromosome 3. II. Sequence features of the 4,251,695 bp regions covered by 90 P1, TAC and BAC clones.</title>
        <authorList>
            <person name="Kaneko T."/>
            <person name="Katoh T."/>
            <person name="Sato S."/>
            <person name="Nakamura Y."/>
            <person name="Asamizu E."/>
            <person name="Tabata S."/>
        </authorList>
    </citation>
    <scope>NUCLEOTIDE SEQUENCE [LARGE SCALE GENOMIC DNA]</scope>
    <source>
        <strain>cv. Columbia</strain>
    </source>
</reference>
<reference key="2">
    <citation type="journal article" date="2017" name="Plant J.">
        <title>Araport11: a complete reannotation of the Arabidopsis thaliana reference genome.</title>
        <authorList>
            <person name="Cheng C.Y."/>
            <person name="Krishnakumar V."/>
            <person name="Chan A.P."/>
            <person name="Thibaud-Nissen F."/>
            <person name="Schobel S."/>
            <person name="Town C.D."/>
        </authorList>
    </citation>
    <scope>GENOME REANNOTATION</scope>
    <source>
        <strain>cv. Columbia</strain>
    </source>
</reference>
<reference key="3">
    <citation type="journal article" date="2010" name="BMC Genomics">
        <title>Genome-wide cloning and sequence analysis of leucine-rich repeat receptor-like protein kinase genes in Arabidopsis thaliana.</title>
        <authorList>
            <person name="Gou X."/>
            <person name="He K."/>
            <person name="Yang H."/>
            <person name="Yuan T."/>
            <person name="Lin H."/>
            <person name="Clouse S.D."/>
            <person name="Li J."/>
        </authorList>
    </citation>
    <scope>NUCLEOTIDE SEQUENCE [LARGE SCALE MRNA]</scope>
    <source>
        <strain>cv. Columbia</strain>
    </source>
</reference>
<sequence length="1016" mass="111932">MGKQRRTMISFTLFLTLTMMSSLINGDTDSIQLNDDVLGLIVFKSDLNDPFSHLESWTEDDNTPCSWSYVKCNPKTSRVIELSLDGLALTGKINRGIQKLQRLKVLSLSNNNFTGNINALSNNNHLQKLDLSHNNLSGQIPSSLGSITSLQHLDLTGNSFSGTLSDDLFNNCSSLRYLSLSHNHLEGQIPSTLFRCSVLNSLNLSRNRFSGNPSFVSGIWRLERLRALDLSSNSLSGSIPLGILSLHNLKELQLQRNQFSGALPSDIGLCPHLNRVDLSSNHFSGELPRTLQKLKSLNHFDVSNNLLSGDFPPWIGDMTGLVHLDFSSNELTGKLPSSISNLRSLKDLNLSENKLSGEVPESLESCKELMIVQLKGNDFSGNIPDGFFDLGLQEMDFSGNGLTGSIPRGSSRLFESLIRLDLSHNSLTGSIPGEVGLFIHMRYLNLSWNHFNTRVPPEIEFLQNLTVLDLRNSALIGSVPADICESQSLQILQLDGNSLTGSIPEGIGNCSSLKLLSLSHNNLTGPIPKSLSNLQELKILKLEANKLSGEIPKELGDLQNLLLVNVSFNRLIGRLPLGDVFQSLDQSAIQGNLGICSPLLRGPCTLNVPKPLVINPNSYGNGNNMPGNRASGGSGTFHRRMFLSVSVIVAISAAILIFSGVIIITLLNASVRRRLAFVDNALESIFSGSSKSGRSLMMGKLVLLNSRTSRSSSSSQEFERNPESLLNKASRIGEGVFGTVYKAPLGEQGRNLAVKKLVPSPILQNLEDFDREVRILAKAKHPNLVSIKGYFWTPDLHLLVSEYIPNGNLQSKLHEREPSTPPLSWDVRYKIILGTAKGLAYLHHTFRPTTIHFNLKPTNILLDEKNNPKISDFGLSRLLTTQDGNTMNNNRFQNALGYVAPELECQNLRVNEKCDVYGFGVLILELVTGRRPVEYGEDSFVILSDHVRVMLEQGNVLECIDPVMEEQYSEDEVLPVLKLALVCTSQIPSNRPTMAEIVQILQVINSPVPHRIMDSF</sequence>
<comment type="interaction">
    <interactant intactId="EBI-16956175">
        <id>Q9LRT1</id>
    </interactant>
    <interactant intactId="EBI-17070892">
        <id>C0LGI2</id>
        <label>At1g67720</label>
    </interactant>
    <organismsDiffer>false</organismsDiffer>
    <experiments>2</experiments>
</comment>
<comment type="interaction">
    <interactant intactId="EBI-16956175">
        <id>Q9LRT1</id>
    </interactant>
    <interactant intactId="EBI-1238661">
        <id>Q9M9C5</id>
        <label>At1g68400</label>
    </interactant>
    <organismsDiffer>false</organismsDiffer>
    <experiments>3</experiments>
</comment>
<comment type="interaction">
    <interactant intactId="EBI-16956175">
        <id>Q9LRT1</id>
    </interactant>
    <interactant intactId="EBI-20651541">
        <id>C0LGJ9</id>
        <label>At2g02780</label>
    </interactant>
    <organismsDiffer>false</organismsDiffer>
    <experiments>2</experiments>
</comment>
<comment type="interaction">
    <interactant intactId="EBI-16956175">
        <id>Q9LRT1</id>
    </interactant>
    <interactant intactId="EBI-16946048">
        <id>C0LGL4</id>
        <label>At2g28960</label>
    </interactant>
    <organismsDiffer>false</organismsDiffer>
    <experiments>2</experiments>
</comment>
<comment type="interaction">
    <interactant intactId="EBI-16956175">
        <id>Q9LRT1</id>
    </interactant>
    <interactant intactId="EBI-20653589">
        <id>C0LGM1</id>
        <label>LRR-RLK</label>
    </interactant>
    <organismsDiffer>false</organismsDiffer>
    <experiments>2</experiments>
</comment>
<comment type="interaction">
    <interactant intactId="EBI-16956175">
        <id>Q9LRT1</id>
    </interactant>
    <interactant intactId="EBI-16905038">
        <id>O64483</id>
        <label>SIRK</label>
    </interactant>
    <organismsDiffer>false</organismsDiffer>
    <experiments>2</experiments>
</comment>
<comment type="subcellular location">
    <subcellularLocation>
        <location evidence="4">Membrane</location>
        <topology evidence="4">Single-pass type I membrane protein</topology>
    </subcellularLocation>
</comment>
<comment type="domain">
    <text>The protein kinase domain is predicted to be catalytically inactive. Lacks the conserved Asp active site at position 854, which is replaced by an Asn residue.</text>
</comment>
<comment type="similarity">
    <text evidence="3">Belongs to the protein kinase superfamily. Ser/Thr protein kinase family.</text>
</comment>
<evidence type="ECO:0000250" key="1">
    <source>
        <dbReference type="UniProtKB" id="C0LGT6"/>
    </source>
</evidence>
<evidence type="ECO:0000255" key="2"/>
<evidence type="ECO:0000255" key="3">
    <source>
        <dbReference type="PROSITE-ProRule" id="PRU00159"/>
    </source>
</evidence>
<evidence type="ECO:0000305" key="4"/>
<name>Y3804_ARATH</name>
<feature type="signal peptide" evidence="2">
    <location>
        <begin position="1"/>
        <end position="26"/>
    </location>
</feature>
<feature type="chain" id="PRO_0000389466" description="Probably inactive leucine-rich repeat receptor-like protein kinase At3g28040">
    <location>
        <begin position="27"/>
        <end position="1016"/>
    </location>
</feature>
<feature type="topological domain" description="Extracellular" evidence="2">
    <location>
        <begin position="27"/>
        <end position="646"/>
    </location>
</feature>
<feature type="transmembrane region" description="Helical" evidence="2">
    <location>
        <begin position="647"/>
        <end position="667"/>
    </location>
</feature>
<feature type="topological domain" description="Cytoplasmic" evidence="2">
    <location>
        <begin position="668"/>
        <end position="1016"/>
    </location>
</feature>
<feature type="repeat" description="LRR 1">
    <location>
        <begin position="102"/>
        <end position="124"/>
    </location>
</feature>
<feature type="repeat" description="LRR 2">
    <location>
        <begin position="125"/>
        <end position="147"/>
    </location>
</feature>
<feature type="repeat" description="LRR 3">
    <location>
        <begin position="149"/>
        <end position="171"/>
    </location>
</feature>
<feature type="repeat" description="LRR 4">
    <location>
        <begin position="174"/>
        <end position="196"/>
    </location>
</feature>
<feature type="repeat" description="LRR 5">
    <location>
        <begin position="198"/>
        <end position="219"/>
    </location>
</feature>
<feature type="repeat" description="LRR 6">
    <location>
        <begin position="224"/>
        <end position="245"/>
    </location>
</feature>
<feature type="repeat" description="LRR 7">
    <location>
        <begin position="248"/>
        <end position="270"/>
    </location>
</feature>
<feature type="repeat" description="LRR 8">
    <location>
        <begin position="272"/>
        <end position="295"/>
    </location>
</feature>
<feature type="repeat" description="LRR 9">
    <location>
        <begin position="296"/>
        <end position="318"/>
    </location>
</feature>
<feature type="repeat" description="LRR 10">
    <location>
        <begin position="320"/>
        <end position="342"/>
    </location>
</feature>
<feature type="repeat" description="LRR 11">
    <location>
        <begin position="344"/>
        <end position="366"/>
    </location>
</feature>
<feature type="repeat" description="LRR 12">
    <location>
        <begin position="368"/>
        <end position="390"/>
    </location>
</feature>
<feature type="repeat" description="LRR 13">
    <location>
        <begin position="391"/>
        <end position="413"/>
    </location>
</feature>
<feature type="repeat" description="LRR 14">
    <location>
        <begin position="416"/>
        <end position="438"/>
    </location>
</feature>
<feature type="repeat" description="LRR 15">
    <location>
        <begin position="440"/>
        <end position="462"/>
    </location>
</feature>
<feature type="repeat" description="LRR 16">
    <location>
        <begin position="464"/>
        <end position="486"/>
    </location>
</feature>
<feature type="repeat" description="LRR 17">
    <location>
        <begin position="488"/>
        <end position="510"/>
    </location>
</feature>
<feature type="repeat" description="LRR 18">
    <location>
        <begin position="512"/>
        <end position="535"/>
    </location>
</feature>
<feature type="repeat" description="LRR 19">
    <location>
        <begin position="536"/>
        <end position="559"/>
    </location>
</feature>
<feature type="repeat" description="LRR 20">
    <location>
        <begin position="560"/>
        <end position="582"/>
    </location>
</feature>
<feature type="domain" description="Protein kinase" evidence="3">
    <location>
        <begin position="726"/>
        <end position="1013"/>
    </location>
</feature>
<feature type="binding site" evidence="3">
    <location>
        <begin position="732"/>
        <end position="740"/>
    </location>
    <ligand>
        <name>ATP</name>
        <dbReference type="ChEBI" id="CHEBI:30616"/>
    </ligand>
</feature>
<feature type="binding site" evidence="3">
    <location>
        <position position="755"/>
    </location>
    <ligand>
        <name>ATP</name>
        <dbReference type="ChEBI" id="CHEBI:30616"/>
    </ligand>
</feature>
<feature type="modified residue" description="Phosphotyrosine" evidence="1">
    <location>
        <position position="841"/>
    </location>
</feature>
<feature type="modified residue" description="Phosphotyrosine" evidence="1">
    <location>
        <position position="898"/>
    </location>
</feature>
<feature type="glycosylation site" description="N-linked (GlcNAc...) asparagine" evidence="2">
    <location>
        <position position="112"/>
    </location>
</feature>
<feature type="glycosylation site" description="N-linked (GlcNAc...) asparagine" evidence="2">
    <location>
        <position position="135"/>
    </location>
</feature>
<feature type="glycosylation site" description="N-linked (GlcNAc...) asparagine" evidence="2">
    <location>
        <position position="171"/>
    </location>
</feature>
<feature type="glycosylation site" description="N-linked (GlcNAc...) asparagine" evidence="2">
    <location>
        <position position="203"/>
    </location>
</feature>
<feature type="glycosylation site" description="N-linked (GlcNAc...) asparagine" evidence="2">
    <location>
        <position position="349"/>
    </location>
</feature>
<feature type="glycosylation site" description="N-linked (GlcNAc...) asparagine" evidence="2">
    <location>
        <position position="445"/>
    </location>
</feature>
<feature type="glycosylation site" description="N-linked (GlcNAc...) asparagine" evidence="2">
    <location>
        <position position="464"/>
    </location>
</feature>
<feature type="glycosylation site" description="N-linked (GlcNAc...) asparagine" evidence="2">
    <location>
        <position position="509"/>
    </location>
</feature>
<feature type="glycosylation site" description="N-linked (GlcNAc...) asparagine" evidence="2">
    <location>
        <position position="522"/>
    </location>
</feature>
<feature type="glycosylation site" description="N-linked (GlcNAc...) asparagine" evidence="2">
    <location>
        <position position="565"/>
    </location>
</feature>
<gene>
    <name type="ordered locus">At3g28040</name>
    <name type="ORF">MMG15.21</name>
</gene>
<organism>
    <name type="scientific">Arabidopsis thaliana</name>
    <name type="common">Mouse-ear cress</name>
    <dbReference type="NCBI Taxonomy" id="3702"/>
    <lineage>
        <taxon>Eukaryota</taxon>
        <taxon>Viridiplantae</taxon>
        <taxon>Streptophyta</taxon>
        <taxon>Embryophyta</taxon>
        <taxon>Tracheophyta</taxon>
        <taxon>Spermatophyta</taxon>
        <taxon>Magnoliopsida</taxon>
        <taxon>eudicotyledons</taxon>
        <taxon>Gunneridae</taxon>
        <taxon>Pentapetalae</taxon>
        <taxon>rosids</taxon>
        <taxon>malvids</taxon>
        <taxon>Brassicales</taxon>
        <taxon>Brassicaceae</taxon>
        <taxon>Camelineae</taxon>
        <taxon>Arabidopsis</taxon>
    </lineage>
</organism>
<protein>
    <recommendedName>
        <fullName>Probably inactive leucine-rich repeat receptor-like protein kinase At3g28040</fullName>
    </recommendedName>
</protein>